<keyword id="KW-0012">Acyltransferase</keyword>
<keyword id="KW-0963">Cytoplasm</keyword>
<keyword id="KW-0808">Transferase</keyword>
<sequence>MVPWLGPDDPFPSIERALGPATGAPGLLAASADLLPSRLIDAYLRGIFPWYSDGQPVLWWSPDPRMILVPAEFKVSPSLRKTLKRVLREPDWEVRVDHDFPGVMRACAQAPRRGQRGTWITAEIIDAYTSLYRSGNAHSIETWHDGRRVGGLYGVSFGRMFFGESMYADVTDASKIALATLVAHLREQGLEMIDCQQNTSHLASLGGREIARKAFVAHVRSAVAEPPIPWQFDKRVLAALTSPAETAAPSGTER</sequence>
<accession>B4E8N6</accession>
<feature type="chain" id="PRO_1000131908" description="Leucyl/phenylalanyl-tRNA--protein transferase">
    <location>
        <begin position="1"/>
        <end position="254"/>
    </location>
</feature>
<gene>
    <name evidence="1" type="primary">aat</name>
    <name type="ordered locus">BceJ2315_15770</name>
    <name type="ORF">BCAL1613</name>
</gene>
<protein>
    <recommendedName>
        <fullName evidence="1">Leucyl/phenylalanyl-tRNA--protein transferase</fullName>
        <ecNumber evidence="1">2.3.2.6</ecNumber>
    </recommendedName>
    <alternativeName>
        <fullName evidence="1">L/F-transferase</fullName>
    </alternativeName>
    <alternativeName>
        <fullName evidence="1">Leucyltransferase</fullName>
    </alternativeName>
    <alternativeName>
        <fullName evidence="1">Phenyalanyltransferase</fullName>
    </alternativeName>
</protein>
<comment type="function">
    <text evidence="1">Functions in the N-end rule pathway of protein degradation where it conjugates Leu, Phe and, less efficiently, Met from aminoacyl-tRNAs to the N-termini of proteins containing an N-terminal arginine or lysine.</text>
</comment>
<comment type="catalytic activity">
    <reaction evidence="1">
        <text>N-terminal L-lysyl-[protein] + L-leucyl-tRNA(Leu) = N-terminal L-leucyl-L-lysyl-[protein] + tRNA(Leu) + H(+)</text>
        <dbReference type="Rhea" id="RHEA:12340"/>
        <dbReference type="Rhea" id="RHEA-COMP:9613"/>
        <dbReference type="Rhea" id="RHEA-COMP:9622"/>
        <dbReference type="Rhea" id="RHEA-COMP:12670"/>
        <dbReference type="Rhea" id="RHEA-COMP:12671"/>
        <dbReference type="ChEBI" id="CHEBI:15378"/>
        <dbReference type="ChEBI" id="CHEBI:65249"/>
        <dbReference type="ChEBI" id="CHEBI:78442"/>
        <dbReference type="ChEBI" id="CHEBI:78494"/>
        <dbReference type="ChEBI" id="CHEBI:133043"/>
        <dbReference type="EC" id="2.3.2.6"/>
    </reaction>
</comment>
<comment type="catalytic activity">
    <reaction evidence="1">
        <text>N-terminal L-arginyl-[protein] + L-leucyl-tRNA(Leu) = N-terminal L-leucyl-L-arginyl-[protein] + tRNA(Leu) + H(+)</text>
        <dbReference type="Rhea" id="RHEA:50416"/>
        <dbReference type="Rhea" id="RHEA-COMP:9613"/>
        <dbReference type="Rhea" id="RHEA-COMP:9622"/>
        <dbReference type="Rhea" id="RHEA-COMP:12672"/>
        <dbReference type="Rhea" id="RHEA-COMP:12673"/>
        <dbReference type="ChEBI" id="CHEBI:15378"/>
        <dbReference type="ChEBI" id="CHEBI:64719"/>
        <dbReference type="ChEBI" id="CHEBI:78442"/>
        <dbReference type="ChEBI" id="CHEBI:78494"/>
        <dbReference type="ChEBI" id="CHEBI:133044"/>
        <dbReference type="EC" id="2.3.2.6"/>
    </reaction>
</comment>
<comment type="catalytic activity">
    <reaction evidence="1">
        <text>L-phenylalanyl-tRNA(Phe) + an N-terminal L-alpha-aminoacyl-[protein] = an N-terminal L-phenylalanyl-L-alpha-aminoacyl-[protein] + tRNA(Phe)</text>
        <dbReference type="Rhea" id="RHEA:43632"/>
        <dbReference type="Rhea" id="RHEA-COMP:9668"/>
        <dbReference type="Rhea" id="RHEA-COMP:9699"/>
        <dbReference type="Rhea" id="RHEA-COMP:10636"/>
        <dbReference type="Rhea" id="RHEA-COMP:10637"/>
        <dbReference type="ChEBI" id="CHEBI:78442"/>
        <dbReference type="ChEBI" id="CHEBI:78531"/>
        <dbReference type="ChEBI" id="CHEBI:78597"/>
        <dbReference type="ChEBI" id="CHEBI:83561"/>
        <dbReference type="EC" id="2.3.2.6"/>
    </reaction>
</comment>
<comment type="subcellular location">
    <subcellularLocation>
        <location evidence="1">Cytoplasm</location>
    </subcellularLocation>
</comment>
<comment type="similarity">
    <text evidence="1">Belongs to the L/F-transferase family.</text>
</comment>
<proteinExistence type="inferred from homology"/>
<evidence type="ECO:0000255" key="1">
    <source>
        <dbReference type="HAMAP-Rule" id="MF_00688"/>
    </source>
</evidence>
<organism>
    <name type="scientific">Burkholderia cenocepacia (strain ATCC BAA-245 / DSM 16553 / LMG 16656 / NCTC 13227 / J2315 / CF5610)</name>
    <name type="common">Burkholderia cepacia (strain J2315)</name>
    <dbReference type="NCBI Taxonomy" id="216591"/>
    <lineage>
        <taxon>Bacteria</taxon>
        <taxon>Pseudomonadati</taxon>
        <taxon>Pseudomonadota</taxon>
        <taxon>Betaproteobacteria</taxon>
        <taxon>Burkholderiales</taxon>
        <taxon>Burkholderiaceae</taxon>
        <taxon>Burkholderia</taxon>
        <taxon>Burkholderia cepacia complex</taxon>
    </lineage>
</organism>
<reference key="1">
    <citation type="journal article" date="2009" name="J. Bacteriol.">
        <title>The genome of Burkholderia cenocepacia J2315, an epidemic pathogen of cystic fibrosis patients.</title>
        <authorList>
            <person name="Holden M.T."/>
            <person name="Seth-Smith H.M."/>
            <person name="Crossman L.C."/>
            <person name="Sebaihia M."/>
            <person name="Bentley S.D."/>
            <person name="Cerdeno-Tarraga A.M."/>
            <person name="Thomson N.R."/>
            <person name="Bason N."/>
            <person name="Quail M.A."/>
            <person name="Sharp S."/>
            <person name="Cherevach I."/>
            <person name="Churcher C."/>
            <person name="Goodhead I."/>
            <person name="Hauser H."/>
            <person name="Holroyd N."/>
            <person name="Mungall K."/>
            <person name="Scott P."/>
            <person name="Walker D."/>
            <person name="White B."/>
            <person name="Rose H."/>
            <person name="Iversen P."/>
            <person name="Mil-Homens D."/>
            <person name="Rocha E.P."/>
            <person name="Fialho A.M."/>
            <person name="Baldwin A."/>
            <person name="Dowson C."/>
            <person name="Barrell B.G."/>
            <person name="Govan J.R."/>
            <person name="Vandamme P."/>
            <person name="Hart C.A."/>
            <person name="Mahenthiralingam E."/>
            <person name="Parkhill J."/>
        </authorList>
    </citation>
    <scope>NUCLEOTIDE SEQUENCE [LARGE SCALE GENOMIC DNA]</scope>
    <source>
        <strain>ATCC BAA-245 / DSM 16553 / LMG 16656 / NCTC 13227 / J2315 / CF5610</strain>
    </source>
</reference>
<dbReference type="EC" id="2.3.2.6" evidence="1"/>
<dbReference type="EMBL" id="AM747720">
    <property type="protein sequence ID" value="CAR51911.1"/>
    <property type="molecule type" value="Genomic_DNA"/>
</dbReference>
<dbReference type="RefSeq" id="WP_006484147.1">
    <property type="nucleotide sequence ID" value="NC_011000.1"/>
</dbReference>
<dbReference type="SMR" id="B4E8N6"/>
<dbReference type="KEGG" id="bcj:BCAL1613"/>
<dbReference type="eggNOG" id="COG2360">
    <property type="taxonomic scope" value="Bacteria"/>
</dbReference>
<dbReference type="HOGENOM" id="CLU_075045_0_0_4"/>
<dbReference type="BioCyc" id="BCEN216591:G1G1V-1788-MONOMER"/>
<dbReference type="Proteomes" id="UP000001035">
    <property type="component" value="Chromosome 1"/>
</dbReference>
<dbReference type="GO" id="GO:0005737">
    <property type="term" value="C:cytoplasm"/>
    <property type="evidence" value="ECO:0007669"/>
    <property type="project" value="UniProtKB-SubCell"/>
</dbReference>
<dbReference type="GO" id="GO:0008914">
    <property type="term" value="F:leucyl-tRNA--protein transferase activity"/>
    <property type="evidence" value="ECO:0007669"/>
    <property type="project" value="UniProtKB-UniRule"/>
</dbReference>
<dbReference type="GO" id="GO:0030163">
    <property type="term" value="P:protein catabolic process"/>
    <property type="evidence" value="ECO:0007669"/>
    <property type="project" value="UniProtKB-UniRule"/>
</dbReference>
<dbReference type="Gene3D" id="3.40.630.70">
    <property type="entry name" value="Leucyl/phenylalanyl-tRNA-protein transferase, C-terminal domain"/>
    <property type="match status" value="1"/>
</dbReference>
<dbReference type="Gene3D" id="3.30.70.3550">
    <property type="entry name" value="Leucyl/phenylalanyl-tRNA-protein transferase, N-terminal domain"/>
    <property type="match status" value="1"/>
</dbReference>
<dbReference type="HAMAP" id="MF_00688">
    <property type="entry name" value="Leu_Phe_trans"/>
    <property type="match status" value="1"/>
</dbReference>
<dbReference type="InterPro" id="IPR016181">
    <property type="entry name" value="Acyl_CoA_acyltransferase"/>
</dbReference>
<dbReference type="InterPro" id="IPR004616">
    <property type="entry name" value="Leu/Phe-tRNA_Trfase"/>
</dbReference>
<dbReference type="InterPro" id="IPR042203">
    <property type="entry name" value="Leu/Phe-tRNA_Trfase_C"/>
</dbReference>
<dbReference type="InterPro" id="IPR042221">
    <property type="entry name" value="Leu/Phe-tRNA_Trfase_N"/>
</dbReference>
<dbReference type="NCBIfam" id="TIGR00667">
    <property type="entry name" value="aat"/>
    <property type="match status" value="1"/>
</dbReference>
<dbReference type="PANTHER" id="PTHR30098">
    <property type="entry name" value="LEUCYL/PHENYLALANYL-TRNA--PROTEIN TRANSFERASE"/>
    <property type="match status" value="1"/>
</dbReference>
<dbReference type="PANTHER" id="PTHR30098:SF2">
    <property type="entry name" value="LEUCYL_PHENYLALANYL-TRNA--PROTEIN TRANSFERASE"/>
    <property type="match status" value="1"/>
</dbReference>
<dbReference type="Pfam" id="PF03588">
    <property type="entry name" value="Leu_Phe_trans"/>
    <property type="match status" value="1"/>
</dbReference>
<dbReference type="SUPFAM" id="SSF55729">
    <property type="entry name" value="Acyl-CoA N-acyltransferases (Nat)"/>
    <property type="match status" value="1"/>
</dbReference>
<name>LFTR_BURCJ</name>